<dbReference type="EMBL" id="AL123456">
    <property type="protein sequence ID" value="CCP46731.1"/>
    <property type="molecule type" value="Genomic_DNA"/>
</dbReference>
<dbReference type="RefSeq" id="NP_218419.1">
    <property type="nucleotide sequence ID" value="NC_000962.3"/>
</dbReference>
<dbReference type="PDB" id="4QLP">
    <property type="method" value="X-ray"/>
    <property type="resolution" value="1.10 A"/>
    <property type="chains" value="A=2-176"/>
</dbReference>
<dbReference type="PDBsum" id="4QLP"/>
<dbReference type="SMR" id="O05443"/>
<dbReference type="FunCoup" id="O05443">
    <property type="interactions" value="1"/>
</dbReference>
<dbReference type="IntAct" id="O05443">
    <property type="interactions" value="1"/>
</dbReference>
<dbReference type="STRING" id="83332.Rv3902c"/>
<dbReference type="PaxDb" id="83332-Rv3902c"/>
<dbReference type="DNASU" id="886236"/>
<dbReference type="GeneID" id="886236"/>
<dbReference type="KEGG" id="mtu:Rv3902c"/>
<dbReference type="KEGG" id="mtv:RVBD_3902c"/>
<dbReference type="PATRIC" id="fig|83332.111.peg.4346"/>
<dbReference type="TubercuList" id="Rv3902c"/>
<dbReference type="eggNOG" id="ENOG502ZPGV">
    <property type="taxonomic scope" value="Bacteria"/>
</dbReference>
<dbReference type="HOGENOM" id="CLU_1546538_0_0_11"/>
<dbReference type="InParanoid" id="O05443"/>
<dbReference type="OrthoDB" id="4742108at2"/>
<dbReference type="Proteomes" id="UP000001584">
    <property type="component" value="Chromosome"/>
</dbReference>
<dbReference type="InterPro" id="IPR028953">
    <property type="entry name" value="Imm_IFT-like"/>
</dbReference>
<dbReference type="Pfam" id="PF15598">
    <property type="entry name" value="Imm61"/>
    <property type="match status" value="1"/>
</dbReference>
<keyword id="KW-0002">3D-structure</keyword>
<keyword id="KW-1185">Reference proteome</keyword>
<evidence type="ECO:0000269" key="1">
    <source>
    </source>
</evidence>
<evidence type="ECO:0000303" key="2">
    <source>
    </source>
</evidence>
<evidence type="ECO:0000305" key="3"/>
<evidence type="ECO:0000312" key="4">
    <source>
        <dbReference type="EMBL" id="CCP46731.1"/>
    </source>
</evidence>
<evidence type="ECO:0007744" key="5">
    <source>
        <dbReference type="PDB" id="4QLP"/>
    </source>
</evidence>
<evidence type="ECO:0007829" key="6">
    <source>
        <dbReference type="PDB" id="4QLP"/>
    </source>
</evidence>
<proteinExistence type="evidence at protein level"/>
<reference key="1">
    <citation type="journal article" date="1998" name="Nature">
        <title>Deciphering the biology of Mycobacterium tuberculosis from the complete genome sequence.</title>
        <authorList>
            <person name="Cole S.T."/>
            <person name="Brosch R."/>
            <person name="Parkhill J."/>
            <person name="Garnier T."/>
            <person name="Churcher C.M."/>
            <person name="Harris D.E."/>
            <person name="Gordon S.V."/>
            <person name="Eiglmeier K."/>
            <person name="Gas S."/>
            <person name="Barry C.E. III"/>
            <person name="Tekaia F."/>
            <person name="Badcock K."/>
            <person name="Basham D."/>
            <person name="Brown D."/>
            <person name="Chillingworth T."/>
            <person name="Connor R."/>
            <person name="Davies R.M."/>
            <person name="Devlin K."/>
            <person name="Feltwell T."/>
            <person name="Gentles S."/>
            <person name="Hamlin N."/>
            <person name="Holroyd S."/>
            <person name="Hornsby T."/>
            <person name="Jagels K."/>
            <person name="Krogh A."/>
            <person name="McLean J."/>
            <person name="Moule S."/>
            <person name="Murphy L.D."/>
            <person name="Oliver S."/>
            <person name="Osborne J."/>
            <person name="Quail M.A."/>
            <person name="Rajandream M.A."/>
            <person name="Rogers J."/>
            <person name="Rutter S."/>
            <person name="Seeger K."/>
            <person name="Skelton S."/>
            <person name="Squares S."/>
            <person name="Squares R."/>
            <person name="Sulston J.E."/>
            <person name="Taylor K."/>
            <person name="Whitehead S."/>
            <person name="Barrell B.G."/>
        </authorList>
    </citation>
    <scope>NUCLEOTIDE SEQUENCE [LARGE SCALE GENOMIC DNA]</scope>
    <source>
        <strain>ATCC 25618 / H37Rv</strain>
    </source>
</reference>
<reference key="2">
    <citation type="journal article" date="2011" name="Mol. Cell. Proteomics">
        <title>Proteogenomic analysis of Mycobacterium tuberculosis by high resolution mass spectrometry.</title>
        <authorList>
            <person name="Kelkar D.S."/>
            <person name="Kumar D."/>
            <person name="Kumar P."/>
            <person name="Balakrishnan L."/>
            <person name="Muthusamy B."/>
            <person name="Yadav A.K."/>
            <person name="Shrivastava P."/>
            <person name="Marimuthu A."/>
            <person name="Anand S."/>
            <person name="Sundaram H."/>
            <person name="Kingsbury R."/>
            <person name="Harsha H.C."/>
            <person name="Nair B."/>
            <person name="Prasad T.S."/>
            <person name="Chauhan D.S."/>
            <person name="Katoch K."/>
            <person name="Katoch V.M."/>
            <person name="Kumar P."/>
            <person name="Chaerkady R."/>
            <person name="Ramachandran S."/>
            <person name="Dash D."/>
            <person name="Pandey A."/>
        </authorList>
    </citation>
    <scope>IDENTIFICATION BY MASS SPECTROMETRY [LARGE SCALE ANALYSIS]</scope>
    <source>
        <strain>ATCC 25618 / H37Rv</strain>
    </source>
</reference>
<reference evidence="5" key="3">
    <citation type="journal article" date="2015" name="Nat. Struct. Mol. Biol.">
        <title>The tuberculosis necrotizing toxin kills macrophages by hydrolyzing NAD.</title>
        <authorList>
            <person name="Sun J."/>
            <person name="Siroy A."/>
            <person name="Lokareddy R.K."/>
            <person name="Speer A."/>
            <person name="Doornbos K.S."/>
            <person name="Cingolani G."/>
            <person name="Niederweis M."/>
        </authorList>
    </citation>
    <scope>X-RAY CRYSTALLOGRAPHY (1.10 ANGSTROMS) OF 2-176 IN COMPLEX WITH TNT</scope>
    <scope>FUNCTION</scope>
    <scope>SUBUNIT</scope>
</reference>
<protein>
    <recommendedName>
        <fullName evidence="2">Immunity factor for TNT</fullName>
        <shortName evidence="2">IFT</shortName>
    </recommendedName>
    <alternativeName>
        <fullName evidence="3">Tuberculosis necrotizing toxin antitoxin</fullName>
        <shortName evidence="3">TNT antitoxin</shortName>
    </alternativeName>
</protein>
<organism>
    <name type="scientific">Mycobacterium tuberculosis (strain ATCC 25618 / H37Rv)</name>
    <dbReference type="NCBI Taxonomy" id="83332"/>
    <lineage>
        <taxon>Bacteria</taxon>
        <taxon>Bacillati</taxon>
        <taxon>Actinomycetota</taxon>
        <taxon>Actinomycetes</taxon>
        <taxon>Mycobacteriales</taxon>
        <taxon>Mycobacteriaceae</taxon>
        <taxon>Mycobacterium</taxon>
        <taxon>Mycobacterium tuberculosis complex</taxon>
    </lineage>
</organism>
<sequence length="176" mass="19822">MTIGVDLSTDLQDWIRLSGMNMIQGSETNDGRTILWNKGGEVRYFIDRLAGWYVITSSDRMSREGYEFAAASMSVIEKYLYGYFGGSVRSERELPAIRAPFQPEELMPEYSIGTMTFAGRQRDTLIDSSGTVVAITAADRLVELSHYLDVSVNVIKDSFLDSEGKPLFTLWKDYKG</sequence>
<feature type="chain" id="PRO_0000437788" description="Immunity factor for TNT">
    <location>
        <begin position="1"/>
        <end position="176"/>
    </location>
</feature>
<feature type="helix" evidence="6">
    <location>
        <begin position="9"/>
        <end position="17"/>
    </location>
</feature>
<feature type="strand" evidence="6">
    <location>
        <begin position="21"/>
        <end position="23"/>
    </location>
</feature>
<feature type="helix" evidence="6">
    <location>
        <begin position="25"/>
        <end position="27"/>
    </location>
</feature>
<feature type="strand" evidence="6">
    <location>
        <begin position="28"/>
        <end position="30"/>
    </location>
</feature>
<feature type="strand" evidence="6">
    <location>
        <begin position="33"/>
        <end position="36"/>
    </location>
</feature>
<feature type="helix" evidence="6">
    <location>
        <begin position="38"/>
        <end position="40"/>
    </location>
</feature>
<feature type="strand" evidence="6">
    <location>
        <begin position="41"/>
        <end position="49"/>
    </location>
</feature>
<feature type="strand" evidence="6">
    <location>
        <begin position="52"/>
        <end position="59"/>
    </location>
</feature>
<feature type="strand" evidence="6">
    <location>
        <begin position="65"/>
        <end position="72"/>
    </location>
</feature>
<feature type="helix" evidence="6">
    <location>
        <begin position="73"/>
        <end position="91"/>
    </location>
</feature>
<feature type="helix" evidence="6">
    <location>
        <begin position="103"/>
        <end position="105"/>
    </location>
</feature>
<feature type="strand" evidence="6">
    <location>
        <begin position="111"/>
        <end position="117"/>
    </location>
</feature>
<feature type="strand" evidence="6">
    <location>
        <begin position="120"/>
        <end position="126"/>
    </location>
</feature>
<feature type="strand" evidence="6">
    <location>
        <begin position="132"/>
        <end position="136"/>
    </location>
</feature>
<feature type="helix" evidence="6">
    <location>
        <begin position="138"/>
        <end position="149"/>
    </location>
</feature>
<feature type="helix" evidence="6">
    <location>
        <begin position="152"/>
        <end position="160"/>
    </location>
</feature>
<feature type="turn" evidence="6">
    <location>
        <begin position="165"/>
        <end position="167"/>
    </location>
</feature>
<feature type="helix" evidence="6">
    <location>
        <begin position="171"/>
        <end position="173"/>
    </location>
</feature>
<comment type="function">
    <text evidence="1">Antitoxin for tuberculosis necrotizing toxin (TNT). Acts by binding directly to TNT, which inhibits NAD(+) glycohydrolase activity of TNT and protects M.tuberculosis from self-poisoning.</text>
</comment>
<comment type="subunit">
    <text evidence="1">Interacts with the tuberculosis necrotizing toxin (TNT), the C-terminal domain of the outer membrane channel protein CpnT.</text>
</comment>
<comment type="interaction">
    <interactant intactId="EBI-16167151">
        <id>O05443</id>
    </interactant>
    <interactant intactId="EBI-16167127">
        <id>O05442</id>
        <label>cpnT</label>
    </interactant>
    <organismsDiffer>false</organismsDiffer>
    <experiments>5</experiments>
</comment>
<name>IFTNT_MYCTU</name>
<gene>
    <name evidence="4" type="ordered locus">Rv3902c</name>
</gene>
<accession>O05443</accession>
<accession>F2GDR3</accession>
<accession>I6YDB2</accession>
<accession>Q7D4M5</accession>